<name>PYRK_THEP1</name>
<reference key="1">
    <citation type="submission" date="2007-05" db="EMBL/GenBank/DDBJ databases">
        <title>Complete sequence of Thermotoga petrophila RKU-1.</title>
        <authorList>
            <consortium name="US DOE Joint Genome Institute"/>
            <person name="Copeland A."/>
            <person name="Lucas S."/>
            <person name="Lapidus A."/>
            <person name="Barry K."/>
            <person name="Glavina del Rio T."/>
            <person name="Dalin E."/>
            <person name="Tice H."/>
            <person name="Pitluck S."/>
            <person name="Sims D."/>
            <person name="Brettin T."/>
            <person name="Bruce D."/>
            <person name="Detter J.C."/>
            <person name="Han C."/>
            <person name="Tapia R."/>
            <person name="Schmutz J."/>
            <person name="Larimer F."/>
            <person name="Land M."/>
            <person name="Hauser L."/>
            <person name="Kyrpides N."/>
            <person name="Mikhailova N."/>
            <person name="Nelson K."/>
            <person name="Gogarten J.P."/>
            <person name="Noll K."/>
            <person name="Richardson P."/>
        </authorList>
    </citation>
    <scope>NUCLEOTIDE SEQUENCE [LARGE SCALE GENOMIC DNA]</scope>
    <source>
        <strain>ATCC BAA-488 / DSM 13995 / JCM 10881 / RKU-1</strain>
    </source>
</reference>
<gene>
    <name type="primary">pyrK</name>
    <name type="ordered locus">Tpet_0585</name>
</gene>
<dbReference type="EMBL" id="CP000702">
    <property type="protein sequence ID" value="ABQ46606.1"/>
    <property type="molecule type" value="Genomic_DNA"/>
</dbReference>
<dbReference type="RefSeq" id="WP_010865096.1">
    <property type="nucleotide sequence ID" value="NC_009486.1"/>
</dbReference>
<dbReference type="SMR" id="A5IK83"/>
<dbReference type="STRING" id="390874.Tpet_0585"/>
<dbReference type="KEGG" id="tpt:Tpet_0585"/>
<dbReference type="eggNOG" id="COG0543">
    <property type="taxonomic scope" value="Bacteria"/>
</dbReference>
<dbReference type="HOGENOM" id="CLU_003827_1_2_0"/>
<dbReference type="UniPathway" id="UPA00070">
    <property type="reaction ID" value="UER00945"/>
</dbReference>
<dbReference type="Proteomes" id="UP000006558">
    <property type="component" value="Chromosome"/>
</dbReference>
<dbReference type="GO" id="GO:0051537">
    <property type="term" value="F:2 iron, 2 sulfur cluster binding"/>
    <property type="evidence" value="ECO:0007669"/>
    <property type="project" value="UniProtKB-KW"/>
</dbReference>
<dbReference type="GO" id="GO:0050660">
    <property type="term" value="F:flavin adenine dinucleotide binding"/>
    <property type="evidence" value="ECO:0007669"/>
    <property type="project" value="InterPro"/>
</dbReference>
<dbReference type="GO" id="GO:0046872">
    <property type="term" value="F:metal ion binding"/>
    <property type="evidence" value="ECO:0007669"/>
    <property type="project" value="UniProtKB-KW"/>
</dbReference>
<dbReference type="GO" id="GO:0044205">
    <property type="term" value="P:'de novo' UMP biosynthetic process"/>
    <property type="evidence" value="ECO:0007669"/>
    <property type="project" value="UniProtKB-UniPathway"/>
</dbReference>
<dbReference type="CDD" id="cd06192">
    <property type="entry name" value="DHOD_e_trans_like"/>
    <property type="match status" value="1"/>
</dbReference>
<dbReference type="Gene3D" id="2.10.240.10">
    <property type="entry name" value="Dihydroorotate dehydrogenase, electron transfer subunit"/>
    <property type="match status" value="1"/>
</dbReference>
<dbReference type="Gene3D" id="2.40.30.10">
    <property type="entry name" value="Translation factors"/>
    <property type="match status" value="1"/>
</dbReference>
<dbReference type="InterPro" id="IPR012165">
    <property type="entry name" value="Cyt_c3_hydrogenase_gsu"/>
</dbReference>
<dbReference type="InterPro" id="IPR037117">
    <property type="entry name" value="Dihydroorotate_DH_ele_sf"/>
</dbReference>
<dbReference type="InterPro" id="IPR019480">
    <property type="entry name" value="Dihydroorotate_DH_Fe-S-bd"/>
</dbReference>
<dbReference type="InterPro" id="IPR039261">
    <property type="entry name" value="FNR_nucleotide-bd"/>
</dbReference>
<dbReference type="InterPro" id="IPR050353">
    <property type="entry name" value="PyrK_electron_transfer"/>
</dbReference>
<dbReference type="InterPro" id="IPR017938">
    <property type="entry name" value="Riboflavin_synthase-like_b-brl"/>
</dbReference>
<dbReference type="PANTHER" id="PTHR43513">
    <property type="entry name" value="DIHYDROOROTATE DEHYDROGENASE B (NAD(+)), ELECTRON TRANSFER SUBUNIT"/>
    <property type="match status" value="1"/>
</dbReference>
<dbReference type="PANTHER" id="PTHR43513:SF3">
    <property type="entry name" value="DIHYDROOROTATE DEHYDROGENASE B (NAD(+)), ELECTRON TRANSFER SUBUNIT-RELATED"/>
    <property type="match status" value="1"/>
</dbReference>
<dbReference type="Pfam" id="PF10418">
    <property type="entry name" value="DHODB_Fe-S_bind"/>
    <property type="match status" value="1"/>
</dbReference>
<dbReference type="PIRSF" id="PIRSF006816">
    <property type="entry name" value="Cyc3_hyd_g"/>
    <property type="match status" value="1"/>
</dbReference>
<dbReference type="SUPFAM" id="SSF52343">
    <property type="entry name" value="Ferredoxin reductase-like, C-terminal NADP-linked domain"/>
    <property type="match status" value="1"/>
</dbReference>
<dbReference type="SUPFAM" id="SSF63380">
    <property type="entry name" value="Riboflavin synthase domain-like"/>
    <property type="match status" value="1"/>
</dbReference>
<proteinExistence type="inferred from homology"/>
<evidence type="ECO:0000250" key="1"/>
<evidence type="ECO:0000305" key="2"/>
<sequence length="217" mass="24474">MERLLLTKKKTIRVNEDTWIVLFEERIDFSPGQFVMLETPKLVRKPFVLGYWEDHTAISVQVKGKGTKWIVEEAEKIKGHGPLGNGFEKPGKGLLIISPTCLTMAEAFRKKMNVDVLVGSRTPFQIPLDHETAVGDEEFLSKLSSTGEYDWYLVSGSRGMEKVCWEHLKGKEVYFSLEEYMGCGIGACKSCAVFTKEGVKHVCTDGPIFRGDELCWS</sequence>
<comment type="function">
    <text evidence="1">Responsible for channeling the electrons from the oxidation of dihydroorotate from the FMN redox center in the PyrD type B subunit to the ultimate electron acceptor NAD(+).</text>
</comment>
<comment type="cofactor">
    <cofactor evidence="1">
        <name>[2Fe-2S] cluster</name>
        <dbReference type="ChEBI" id="CHEBI:190135"/>
    </cofactor>
    <text evidence="1">Binds 1 [2Fe-2S] cluster per subunit.</text>
</comment>
<comment type="cofactor">
    <cofactor evidence="1">
        <name>FAD</name>
        <dbReference type="ChEBI" id="CHEBI:57692"/>
    </cofactor>
    <text evidence="1">Binds 1 FAD per subunit.</text>
</comment>
<comment type="pathway">
    <text>Pyrimidine metabolism; UMP biosynthesis via de novo pathway; orotate from (S)-dihydroorotate (NAD(+) route): step 1/1.</text>
</comment>
<comment type="subunit">
    <text evidence="1">Heterotetramer of 2 PyrK and 2 PyrD type B subunits.</text>
</comment>
<comment type="similarity">
    <text evidence="2">Belongs to the PyrK family.</text>
</comment>
<protein>
    <recommendedName>
        <fullName>Putative dihydroorotate dehydrogenase B (NAD(+)), electron transfer subunit</fullName>
    </recommendedName>
    <alternativeName>
        <fullName>Dihydroorotate oxidase B, electron transfer subunit</fullName>
    </alternativeName>
</protein>
<keyword id="KW-0001">2Fe-2S</keyword>
<keyword id="KW-0249">Electron transport</keyword>
<keyword id="KW-0274">FAD</keyword>
<keyword id="KW-0285">Flavoprotein</keyword>
<keyword id="KW-0408">Iron</keyword>
<keyword id="KW-0411">Iron-sulfur</keyword>
<keyword id="KW-0479">Metal-binding</keyword>
<keyword id="KW-0665">Pyrimidine biosynthesis</keyword>
<keyword id="KW-0813">Transport</keyword>
<organism>
    <name type="scientific">Thermotoga petrophila (strain ATCC BAA-488 / DSM 13995 / JCM 10881 / RKU-1)</name>
    <dbReference type="NCBI Taxonomy" id="390874"/>
    <lineage>
        <taxon>Bacteria</taxon>
        <taxon>Thermotogati</taxon>
        <taxon>Thermotogota</taxon>
        <taxon>Thermotogae</taxon>
        <taxon>Thermotogales</taxon>
        <taxon>Thermotogaceae</taxon>
        <taxon>Thermotoga</taxon>
    </lineage>
</organism>
<feature type="chain" id="PRO_0000409561" description="Putative dihydroorotate dehydrogenase B (NAD(+)), electron transfer subunit">
    <location>
        <begin position="1"/>
        <end position="217"/>
    </location>
</feature>
<feature type="binding site" evidence="1">
    <location>
        <begin position="66"/>
        <end position="67"/>
    </location>
    <ligand>
        <name>FAD</name>
        <dbReference type="ChEBI" id="CHEBI:57692"/>
    </ligand>
</feature>
<feature type="binding site" evidence="1">
    <location>
        <position position="183"/>
    </location>
    <ligand>
        <name>[2Fe-2S] cluster</name>
        <dbReference type="ChEBI" id="CHEBI:190135"/>
    </ligand>
</feature>
<feature type="binding site" evidence="1">
    <location>
        <position position="188"/>
    </location>
    <ligand>
        <name>[2Fe-2S] cluster</name>
        <dbReference type="ChEBI" id="CHEBI:190135"/>
    </ligand>
</feature>
<feature type="binding site" evidence="1">
    <location>
        <position position="191"/>
    </location>
    <ligand>
        <name>[2Fe-2S] cluster</name>
        <dbReference type="ChEBI" id="CHEBI:190135"/>
    </ligand>
</feature>
<feature type="binding site" evidence="1">
    <location>
        <position position="203"/>
    </location>
    <ligand>
        <name>[2Fe-2S] cluster</name>
        <dbReference type="ChEBI" id="CHEBI:190135"/>
    </ligand>
</feature>
<accession>A5IK83</accession>